<organism>
    <name type="scientific">Influenza A virus (strain A/Gull/Maryland/704/1977 H13N6)</name>
    <dbReference type="NCBI Taxonomy" id="384499"/>
    <lineage>
        <taxon>Viruses</taxon>
        <taxon>Riboviria</taxon>
        <taxon>Orthornavirae</taxon>
        <taxon>Negarnaviricota</taxon>
        <taxon>Polyploviricotina</taxon>
        <taxon>Insthoviricetes</taxon>
        <taxon>Articulavirales</taxon>
        <taxon>Orthomyxoviridae</taxon>
        <taxon>Alphainfluenzavirus</taxon>
        <taxon>Alphainfluenzavirus influenzae</taxon>
        <taxon>Influenza A virus</taxon>
    </lineage>
</organism>
<evidence type="ECO:0000255" key="1">
    <source>
        <dbReference type="HAMAP-Rule" id="MF_04070"/>
    </source>
</evidence>
<evidence type="ECO:0000256" key="2">
    <source>
        <dbReference type="SAM" id="MobiDB-lite"/>
    </source>
</evidence>
<keyword id="KW-0167">Capsid protein</keyword>
<keyword id="KW-1139">Helical capsid protein</keyword>
<keyword id="KW-1048">Host nucleus</keyword>
<keyword id="KW-0945">Host-virus interaction</keyword>
<keyword id="KW-0687">Ribonucleoprotein</keyword>
<keyword id="KW-0694">RNA-binding</keyword>
<keyword id="KW-0543">Viral nucleoprotein</keyword>
<keyword id="KW-1163">Viral penetration into host nucleus</keyword>
<keyword id="KW-0946">Virion</keyword>
<keyword id="KW-1160">Virus entry into host cell</keyword>
<name>NCAP_I77AF</name>
<feature type="chain" id="PRO_0000079053" description="Nucleoprotein">
    <location>
        <begin position="1"/>
        <end position="498"/>
    </location>
</feature>
<feature type="region of interest" description="Disordered" evidence="2">
    <location>
        <begin position="1"/>
        <end position="22"/>
    </location>
</feature>
<feature type="short sequence motif" description="Unconventional nuclear localization signal" evidence="1">
    <location>
        <begin position="1"/>
        <end position="18"/>
    </location>
</feature>
<feature type="short sequence motif" description="Bipartite nuclear localization signal" evidence="1">
    <location>
        <begin position="198"/>
        <end position="216"/>
    </location>
</feature>
<organismHost>
    <name type="scientific">Aves</name>
    <dbReference type="NCBI Taxonomy" id="8782"/>
</organismHost>
<protein>
    <recommendedName>
        <fullName evidence="1">Nucleoprotein</fullName>
    </recommendedName>
    <alternativeName>
        <fullName evidence="1">Nucleocapsid protein</fullName>
        <shortName evidence="1">Protein N</shortName>
    </alternativeName>
</protein>
<sequence>MASQGTKRSYEQMETGGDRQNANEIRASVGRMVGGIGRFYIQMCTELKLSDNEGRLIQNSITIERMVLSAFDERRNKYLEEHPSTGRDPKKTGGPIYRRRDGKWVRELVLYDKEEIRRIWRQANNGEDATAGLTHLMIWHSNLNDATYQRTRALVRTGMDPRMCSLMQGSTLPRRSGAAGAAVKGVGTMVMELIRMIKRGVNDRNFWRGENGRRTRIAYERMCNILKGKFQTAAQRAMMDQVRESRNPGNAEIEDLIFLARSALILRGAVAHKSCLPACVYGLAVASGYDFEREGYSLVGIDPFRLLQNSQVFSLIRPNENPAHKSQLVWMACHSAAFEDLRVSSFIRGTRVLPRGQLSTRGVQIASNENMETMNSSTLELRSKYWAIRTRSGGNTNQQRASAGQVSVQPTFSVQRNLPFERATIMAAFTGNTEGRTSDMRTEIIRMMENSRPEDVSFQGRGVFELSDEKATNPIVPSFDMSNEGSYFFGDNAEEFDS</sequence>
<gene>
    <name evidence="1" type="primary">NP</name>
</gene>
<comment type="function">
    <text evidence="1">Encapsidates the negative strand viral RNA, protecting it from nucleases. The encapsidated genomic RNA is termed the ribonucleoprotein (RNP) and serves as template for transcription and replication. The RNP needs to be localized in the host nucleus to start an infectious cycle, but is too large to diffuse through the nuclear pore complex. NP comprises at least 2 nuclear localization signals that are responsible for the active RNP import into the nucleus through cellular importin alpha/beta pathway. Later in the infection, nclear export of RNPs are mediated through viral proteins NEP interacting with M1 which binds nucleoproteins. It is possible that nucleoprotein binds directly host exportin-1/XPO1 and plays an active role in RNPs nuclear export. M1 interaction with RNP seems to hide nucleoprotein's nuclear localization signals. Soon after a virion infects a new cell, M1 dissociates from the RNP under acidification of the virion driven by M2 protein. Dissociation of M1 from RNP unmasks nucleoprotein's nuclear localization signals, targeting the RNP to the nucleus.</text>
</comment>
<comment type="subunit">
    <text evidence="1">Homomultimerizes to form the nucleocapsid. May bind host exportin-1/XPO1. Binds to viral genomic RNA. Protein-RNA contacts are mediated by a combination of electrostatic interactions between positively charged residues and the phosphate backbone and planar interactions between aromatic side chains and bases.</text>
</comment>
<comment type="subcellular location">
    <subcellularLocation>
        <location evidence="1">Virion</location>
    </subcellularLocation>
    <subcellularLocation>
        <location evidence="1">Host nucleus</location>
    </subcellularLocation>
</comment>
<comment type="PTM">
    <text evidence="1">Late in virus-infected cells, may be cleaved from a 56-kDa protein to a 53-kDa protein by a cellular caspase. This cleavage might be a marker for the onset of apoptosis in infected cells or have a specific function in virus host interaction.</text>
</comment>
<comment type="similarity">
    <text evidence="1">Belongs to the influenza viruses nucleoprotein family.</text>
</comment>
<proteinExistence type="inferred from homology"/>
<reference key="1">
    <citation type="journal article" date="1990" name="J. Virol.">
        <title>Evolution of the nucleoprotein gene of influenza A virus.</title>
        <authorList>
            <person name="Gorman O.T."/>
            <person name="Bean W.J."/>
            <person name="Kawaoka Y."/>
            <person name="Webster R.G."/>
        </authorList>
    </citation>
    <scope>NUCLEOTIDE SEQUENCE [GENOMIC RNA]</scope>
</reference>
<reference key="2">
    <citation type="journal article" date="1990" name="Virology">
        <title>Derivation of the nucleoproteins (NP) of influenza A viruses isolated from marine mammals.</title>
        <authorList>
            <person name="Mandler J."/>
            <person name="Gorman O.T."/>
            <person name="Ludwig S."/>
            <person name="Schroeder E."/>
            <person name="Fitch W.M."/>
            <person name="Webster R.G."/>
            <person name="Scholtissek C."/>
        </authorList>
    </citation>
    <scope>NUCLEOTIDE SEQUENCE [GENOMIC RNA]</scope>
</reference>
<reference key="3">
    <citation type="journal article" date="2006" name="Science">
        <title>Large-scale sequence analysis of avian influenza isolates.</title>
        <authorList>
            <person name="Obenauer J.C."/>
            <person name="Denson J."/>
            <person name="Mehta P.K."/>
            <person name="Su X."/>
            <person name="Mukatira S."/>
            <person name="Finkelstein D.B."/>
            <person name="Xu X."/>
            <person name="Wang J."/>
            <person name="Ma J."/>
            <person name="Fan Y."/>
            <person name="Rakestraw K.M."/>
            <person name="Webster R.G."/>
            <person name="Hoffmann E."/>
            <person name="Krauss S."/>
            <person name="Zheng J."/>
            <person name="Zhang Z."/>
            <person name="Naeve C.W."/>
        </authorList>
    </citation>
    <scope>NUCLEOTIDE SEQUENCE [GENOMIC RNA]</scope>
</reference>
<dbReference type="EMBL" id="M27521">
    <property type="protein sequence ID" value="AAA43462.1"/>
    <property type="molecule type" value="Genomic_RNA"/>
</dbReference>
<dbReference type="EMBL" id="CY014697">
    <property type="protein sequence ID" value="ABI84570.1"/>
    <property type="molecule type" value="Genomic_RNA"/>
</dbReference>
<dbReference type="SMR" id="P15665"/>
<dbReference type="ABCD" id="P15665">
    <property type="antibodies" value="2 sequenced antibodies"/>
</dbReference>
<dbReference type="PRO" id="PR:P15665"/>
<dbReference type="Proteomes" id="UP000000828">
    <property type="component" value="Genome"/>
</dbReference>
<dbReference type="GO" id="GO:0019029">
    <property type="term" value="C:helical viral capsid"/>
    <property type="evidence" value="ECO:0007669"/>
    <property type="project" value="UniProtKB-UniRule"/>
</dbReference>
<dbReference type="GO" id="GO:0043657">
    <property type="term" value="C:host cell"/>
    <property type="evidence" value="ECO:0007669"/>
    <property type="project" value="GOC"/>
</dbReference>
<dbReference type="GO" id="GO:0042025">
    <property type="term" value="C:host cell nucleus"/>
    <property type="evidence" value="ECO:0007669"/>
    <property type="project" value="UniProtKB-SubCell"/>
</dbReference>
<dbReference type="GO" id="GO:1990904">
    <property type="term" value="C:ribonucleoprotein complex"/>
    <property type="evidence" value="ECO:0007669"/>
    <property type="project" value="UniProtKB-KW"/>
</dbReference>
<dbReference type="GO" id="GO:0019013">
    <property type="term" value="C:viral nucleocapsid"/>
    <property type="evidence" value="ECO:0007669"/>
    <property type="project" value="UniProtKB-UniRule"/>
</dbReference>
<dbReference type="GO" id="GO:0003723">
    <property type="term" value="F:RNA binding"/>
    <property type="evidence" value="ECO:0007669"/>
    <property type="project" value="UniProtKB-UniRule"/>
</dbReference>
<dbReference type="GO" id="GO:0005198">
    <property type="term" value="F:structural molecule activity"/>
    <property type="evidence" value="ECO:0007669"/>
    <property type="project" value="UniProtKB-UniRule"/>
</dbReference>
<dbReference type="GO" id="GO:0046718">
    <property type="term" value="P:symbiont entry into host cell"/>
    <property type="evidence" value="ECO:0007669"/>
    <property type="project" value="UniProtKB-KW"/>
</dbReference>
<dbReference type="GO" id="GO:0075732">
    <property type="term" value="P:viral penetration into host nucleus"/>
    <property type="evidence" value="ECO:0007669"/>
    <property type="project" value="UniProtKB-UniRule"/>
</dbReference>
<dbReference type="HAMAP" id="MF_04070">
    <property type="entry name" value="INFV_NCAP"/>
    <property type="match status" value="1"/>
</dbReference>
<dbReference type="InterPro" id="IPR002141">
    <property type="entry name" value="Flu_NP"/>
</dbReference>
<dbReference type="Pfam" id="PF00506">
    <property type="entry name" value="Flu_NP"/>
    <property type="match status" value="1"/>
</dbReference>
<dbReference type="SUPFAM" id="SSF161003">
    <property type="entry name" value="flu NP-like"/>
    <property type="match status" value="1"/>
</dbReference>
<accession>P15665</accession>
<accession>Q0A412</accession>